<name>TRI33_HUMAN</name>
<keyword id="KW-0002">3D-structure</keyword>
<keyword id="KW-0007">Acetylation</keyword>
<keyword id="KW-0025">Alternative splicing</keyword>
<keyword id="KW-0103">Bromodomain</keyword>
<keyword id="KW-0160">Chromosomal rearrangement</keyword>
<keyword id="KW-0175">Coiled coil</keyword>
<keyword id="KW-0238">DNA-binding</keyword>
<keyword id="KW-1017">Isopeptide bond</keyword>
<keyword id="KW-0479">Metal-binding</keyword>
<keyword id="KW-0488">Methylation</keyword>
<keyword id="KW-0539">Nucleus</keyword>
<keyword id="KW-0597">Phosphoprotein</keyword>
<keyword id="KW-1267">Proteomics identification</keyword>
<keyword id="KW-1185">Reference proteome</keyword>
<keyword id="KW-0677">Repeat</keyword>
<keyword id="KW-0678">Repressor</keyword>
<keyword id="KW-0804">Transcription</keyword>
<keyword id="KW-0805">Transcription regulation</keyword>
<keyword id="KW-0808">Transferase</keyword>
<keyword id="KW-0832">Ubl conjugation</keyword>
<keyword id="KW-0833">Ubl conjugation pathway</keyword>
<keyword id="KW-0862">Zinc</keyword>
<keyword id="KW-0863">Zinc-finger</keyword>
<sequence length="1127" mass="122533">MAENKGGGEAESGGGGSGSAPVTAGAAGPAAQEAEPPLTAVLVEEEEEEGGRAGAEGGAAGPDDGGVAAASSGSAQAASSPAASVGTGVAGGAVSTPAPAPASAPAPGPSAGPPPGPPASLLDTCAVCQQSLQSRREAEPKLLPCLHSFCLRCLPEPERQLSVPIPGGSNGDIQQVGVIRCPVCRQECRQIDLVDNYFVKDTSEAPSSSDEKSEQVCTSCEDNASAVGFCVECGEWLCKTCIEAHQRVKFTKDHLIRKKEDVSESVGASGQRPVFCPVHKQEQLKLFCETCDRLTCRDCQLLEHKEHRYQFLEEAFQNQKGAIENLLAKLLEKKNYVHFAATQVQNRIKEVNETNKRVEQEIKVAIFTLINEINKKGKSLLQQLENVTKERQMKLLQQQNDITGLSRQVKHVMNFTNWAIASGSSTALLYSKRLITFQLRHILKARCDPVPAANGAIRFHCDPTFWAKNVVNLGNLVIESKPAPGYTPNVVVGQVPPGTNHISKTPGQINLAQLRLQHMQQQVYAQKHQQLQQMRMQQPPAPVPTTTTTTQQHPRQAAPQMLQQQPPRLISVQTMQRGNMNCGAFQAHQMRLAQNAARIPGIPRHSGPQYSMMQPHLQRQHSNPGHAGPFPVVSVHNTTINPTSPTTATMANANRGPTSPSVTAIELIPSVTNPENLPSLPDIPPIQLEDAGSSSLDNLLSRYISGSHLPPQPTSTMNPSPGPSALSPGSSGLSNSHTPVRPPSTSSTGSRGSCGSSGRTAEKTSLSFKSDQVKVKQEPGTEDEICSFSGGVKQEKTEDGRRSACMLSSPESSLTPPLSTNLHLESELDALASLENHVKIEPADMNESCKQSGLSSLVNGKSPIRSLMHRSARIGGDGNNKDDDPNEDWCAVCQNGGDLLCCEKCPKVFHLTCHVPTLLSFPSGDWICTFCRDIGKPEVEYDCDNLQHSKKGKTAQGLSPVDQRKCERLLLYLYCHELSIEFQEPVPASIPNYYKIIKKPMDLSTVKKKLQKKHSQHYQIPDDFVADVRLIFKNCERFNEMMKVVQVYADTQEINLKADSEVAQAGKAVALYFEDKLTEIYSDRTFAPLPEFEQEEDDGEVTEDSDEDFIQPRRKRLKSDERPVHIK</sequence>
<accession>Q9UPN9</accession>
<accession>O95855</accession>
<accession>Q5TG72</accession>
<accession>Q5TG73</accession>
<accession>Q5TG74</accession>
<accession>Q9C017</accession>
<accession>Q9UJ79</accession>
<comment type="function">
    <text evidence="1 9 14 15 17">Acts as an E3 ubiquitin-protein ligase. Promotes SMAD4 ubiquitination, nuclear exclusion and degradation via the ubiquitin proteasome pathway. According to PubMed:16751102, does not promote a decrease in the level of endogenous SMAD4. May act as a transcriptional repressor. Inhibits the transcriptional response to TGF-beta/BMP signaling cascade. Plays a role in the control of cell proliferation. Its association with SMAD2 and SMAD3 stimulates erythroid differentiation of hematopoietic stem/progenitor (By similarity). Monoubiquitinates SMAD4 and acts as an inhibitor of SMAD4-dependent TGF-beta/BMP signaling cascade (Monoubiquitination of SMAD4 hampers its ability to form a stable complex with activated SMAD2/3 resulting in inhibition of TGF-beta/BMP signaling cascade).</text>
</comment>
<comment type="catalytic activity">
    <reaction>
        <text>S-ubiquitinyl-[E2 ubiquitin-conjugating enzyme]-L-cysteine + [acceptor protein]-L-lysine = [E2 ubiquitin-conjugating enzyme]-L-cysteine + N(6)-ubiquitinyl-[acceptor protein]-L-lysine.</text>
        <dbReference type="EC" id="2.3.2.27"/>
    </reaction>
</comment>
<comment type="pathway">
    <text>Protein modification; protein ubiquitination.</text>
</comment>
<comment type="subunit">
    <text evidence="9 13 14 15 17">Homooligomer and heterooligomer with TRIM24 and TRIM28 family members. Interacts with SMAD4 in unstimulated cells. Found in a complex with SMAD2 and SMAD3 upon addition of TGF-beta. Interacts with SMAD2 and SMAD3. Interacts with SMAD4 under basal and induced conditions and, upon TGF-beta signaling, with activated SMAD2. Forms a ternary complex with SMAD4 and SMAD2 upon TGF-beta signaling.</text>
</comment>
<comment type="interaction">
    <interactant intactId="EBI-2214398">
        <id>Q9UPN9</id>
    </interactant>
    <interactant intactId="EBI-742064">
        <id>Q03154</id>
        <label>ACY1</label>
    </interactant>
    <organismsDiffer>false</organismsDiffer>
    <experiments>2</experiments>
</comment>
<comment type="interaction">
    <interactant intactId="EBI-2214398">
        <id>Q9UPN9</id>
    </interactant>
    <interactant intactId="EBI-1040141">
        <id>Q15796</id>
        <label>SMAD2</label>
    </interactant>
    <organismsDiffer>false</organismsDiffer>
    <experiments>6</experiments>
</comment>
<comment type="interaction">
    <interactant intactId="EBI-2214398">
        <id>Q9UPN9</id>
    </interactant>
    <interactant intactId="EBI-347263">
        <id>Q13485</id>
        <label>SMAD4</label>
    </interactant>
    <organismsDiffer>false</organismsDiffer>
    <experiments>6</experiments>
</comment>
<comment type="interaction">
    <interactant intactId="EBI-2214398">
        <id>Q9UPN9</id>
    </interactant>
    <interactant intactId="EBI-2130378">
        <id>O15164</id>
        <label>TRIM24</label>
    </interactant>
    <organismsDiffer>false</organismsDiffer>
    <experiments>6</experiments>
</comment>
<comment type="subcellular location">
    <subcellularLocation>
        <location evidence="14 15 17 18">Nucleus</location>
    </subcellularLocation>
    <text evidence="2 18">In discrete nuclear dots resembling nuclear bodies (By similarity). Localizes to sites of DNA damage (PubMed:25593309).</text>
</comment>
<comment type="alternative products">
    <event type="alternative splicing"/>
    <isoform>
        <id>Q9UPN9-1</id>
        <name>Alpha</name>
        <sequence type="displayed"/>
    </isoform>
    <isoform>
        <id>Q9UPN9-2</id>
        <name>Beta</name>
        <sequence type="described" ref="VSP_005774"/>
    </isoform>
</comment>
<comment type="tissue specificity">
    <text>Expressed in stem cells at the bottom of the crypts of the colon (at protein level). Expressed in colon adenomas and adenocarcinomas (at protein level). Expressed in brain, lung, liver, spleen, thymus, prostate, kidney, testis, heart, placenta, pancreas, small intestine, ovary, colon, skeletal muscle and hematopoietic progenitors.</text>
</comment>
<comment type="PTM">
    <text evidence="2">Sumoylated with SUMO1.</text>
</comment>
<comment type="disease">
    <text evidence="10">A chromosomal aberration involving TRIM33 is found in papillary thyroid carcinomas (PTCs). Translocation t(1;10)(p13;q11) with RET. The translocation generates the TRIM33/RET (PTC7) oncogene.</text>
</comment>
<comment type="similarity">
    <text evidence="21">Belongs to the TRIM/RBCC family.</text>
</comment>
<comment type="sequence caution" evidence="21">
    <conflict type="frameshift">
        <sequence resource="EMBL-CDS" id="AAD17259"/>
    </conflict>
</comment>
<comment type="sequence caution" evidence="21">
    <conflict type="erroneous initiation">
        <sequence resource="EMBL-CDS" id="BAA83065"/>
    </conflict>
    <text>Extended N-terminus.</text>
</comment>
<proteinExistence type="evidence at protein level"/>
<dbReference type="EC" id="2.3.2.27"/>
<dbReference type="EMBL" id="AF119043">
    <property type="protein sequence ID" value="AAD17259.1"/>
    <property type="status" value="ALT_FRAME"/>
    <property type="molecule type" value="mRNA"/>
</dbReference>
<dbReference type="EMBL" id="AF220136">
    <property type="protein sequence ID" value="AAG53509.1"/>
    <property type="molecule type" value="mRNA"/>
</dbReference>
<dbReference type="EMBL" id="AF220137">
    <property type="protein sequence ID" value="AAG53510.1"/>
    <property type="molecule type" value="mRNA"/>
</dbReference>
<dbReference type="EMBL" id="AB029036">
    <property type="protein sequence ID" value="BAA83065.1"/>
    <property type="status" value="ALT_INIT"/>
    <property type="molecule type" value="mRNA"/>
</dbReference>
<dbReference type="EMBL" id="AL035410">
    <property type="status" value="NOT_ANNOTATED_CDS"/>
    <property type="molecule type" value="Genomic_DNA"/>
</dbReference>
<dbReference type="EMBL" id="AL390241">
    <property type="status" value="NOT_ANNOTATED_CDS"/>
    <property type="molecule type" value="Genomic_DNA"/>
</dbReference>
<dbReference type="EMBL" id="AJ132948">
    <property type="protein sequence ID" value="CAB55313.1"/>
    <property type="molecule type" value="mRNA"/>
</dbReference>
<dbReference type="CCDS" id="CCDS872.1">
    <molecule id="Q9UPN9-1"/>
</dbReference>
<dbReference type="CCDS" id="CCDS873.1">
    <molecule id="Q9UPN9-2"/>
</dbReference>
<dbReference type="RefSeq" id="NP_056990.3">
    <molecule id="Q9UPN9-1"/>
    <property type="nucleotide sequence ID" value="NM_015906.3"/>
</dbReference>
<dbReference type="RefSeq" id="NP_148980.2">
    <molecule id="Q9UPN9-2"/>
    <property type="nucleotide sequence ID" value="NM_033020.3"/>
</dbReference>
<dbReference type="PDB" id="3U5M">
    <property type="method" value="X-ray"/>
    <property type="resolution" value="3.08 A"/>
    <property type="chains" value="A/B/C/D/E/F/G/H/I/J/K/L=882-1087"/>
</dbReference>
<dbReference type="PDB" id="3U5N">
    <property type="method" value="X-ray"/>
    <property type="resolution" value="1.95 A"/>
    <property type="chains" value="A/B=882-1087"/>
</dbReference>
<dbReference type="PDB" id="3U5O">
    <property type="method" value="X-ray"/>
    <property type="resolution" value="2.70 A"/>
    <property type="chains" value="A/B/C/D/E/F/G/H=882-1087"/>
</dbReference>
<dbReference type="PDB" id="3U5P">
    <property type="method" value="X-ray"/>
    <property type="resolution" value="2.80 A"/>
    <property type="chains" value="A/B/C/D/E/F/G/H=882-1087"/>
</dbReference>
<dbReference type="PDB" id="5MR8">
    <property type="method" value="X-ray"/>
    <property type="resolution" value="1.74 A"/>
    <property type="chains" value="A=882-1090"/>
</dbReference>
<dbReference type="PDB" id="7ZDD">
    <property type="method" value="X-ray"/>
    <property type="resolution" value="1.62 A"/>
    <property type="chains" value="A=882-1090"/>
</dbReference>
<dbReference type="PDB" id="8BD8">
    <property type="method" value="X-ray"/>
    <property type="resolution" value="3.10 A"/>
    <property type="chains" value="A=882-1087"/>
</dbReference>
<dbReference type="PDB" id="8BD9">
    <property type="method" value="X-ray"/>
    <property type="resolution" value="3.20 A"/>
    <property type="chains" value="A=882-1087"/>
</dbReference>
<dbReference type="PDB" id="8BDY">
    <property type="method" value="X-ray"/>
    <property type="resolution" value="3.05 A"/>
    <property type="chains" value="A=882-1087"/>
</dbReference>
<dbReference type="PDBsum" id="3U5M"/>
<dbReference type="PDBsum" id="3U5N"/>
<dbReference type="PDBsum" id="3U5O"/>
<dbReference type="PDBsum" id="3U5P"/>
<dbReference type="PDBsum" id="5MR8"/>
<dbReference type="PDBsum" id="7ZDD"/>
<dbReference type="PDBsum" id="8BD8"/>
<dbReference type="PDBsum" id="8BD9"/>
<dbReference type="PDBsum" id="8BDY"/>
<dbReference type="SMR" id="Q9UPN9"/>
<dbReference type="BioGRID" id="119625">
    <property type="interactions" value="476"/>
</dbReference>
<dbReference type="CORUM" id="Q9UPN9"/>
<dbReference type="DIP" id="DIP-54262N"/>
<dbReference type="FunCoup" id="Q9UPN9">
    <property type="interactions" value="4535"/>
</dbReference>
<dbReference type="IntAct" id="Q9UPN9">
    <property type="interactions" value="140"/>
</dbReference>
<dbReference type="MINT" id="Q9UPN9"/>
<dbReference type="STRING" id="9606.ENSP00000351250"/>
<dbReference type="BindingDB" id="Q9UPN9"/>
<dbReference type="ChEMBL" id="CHEMBL2176772"/>
<dbReference type="GlyCosmos" id="Q9UPN9">
    <property type="glycosylation" value="1 site, 1 glycan"/>
</dbReference>
<dbReference type="GlyGen" id="Q9UPN9">
    <property type="glycosylation" value="5 sites, 1 O-linked glycan (4 sites)"/>
</dbReference>
<dbReference type="iPTMnet" id="Q9UPN9"/>
<dbReference type="PhosphoSitePlus" id="Q9UPN9"/>
<dbReference type="BioMuta" id="TRIM33"/>
<dbReference type="DMDM" id="313104270"/>
<dbReference type="jPOST" id="Q9UPN9"/>
<dbReference type="MassIVE" id="Q9UPN9"/>
<dbReference type="PaxDb" id="9606-ENSP00000351250"/>
<dbReference type="PeptideAtlas" id="Q9UPN9"/>
<dbReference type="ProteomicsDB" id="85392">
    <molecule id="Q9UPN9-1"/>
</dbReference>
<dbReference type="ProteomicsDB" id="85393">
    <molecule id="Q9UPN9-2"/>
</dbReference>
<dbReference type="Pumba" id="Q9UPN9"/>
<dbReference type="ABCD" id="Q9UPN9">
    <property type="antibodies" value="1 sequenced antibody"/>
</dbReference>
<dbReference type="Antibodypedia" id="1303">
    <property type="antibodies" value="438 antibodies from 36 providers"/>
</dbReference>
<dbReference type="DNASU" id="51592"/>
<dbReference type="Ensembl" id="ENST00000358465.7">
    <molecule id="Q9UPN9-1"/>
    <property type="protein sequence ID" value="ENSP00000351250.2"/>
    <property type="gene ID" value="ENSG00000197323.12"/>
</dbReference>
<dbReference type="Ensembl" id="ENST00000369543.6">
    <molecule id="Q9UPN9-2"/>
    <property type="protein sequence ID" value="ENSP00000358556.2"/>
    <property type="gene ID" value="ENSG00000197323.12"/>
</dbReference>
<dbReference type="GeneID" id="51592"/>
<dbReference type="KEGG" id="hsa:51592"/>
<dbReference type="MANE-Select" id="ENST00000358465.7">
    <property type="protein sequence ID" value="ENSP00000351250.2"/>
    <property type="RefSeq nucleotide sequence ID" value="NM_015906.4"/>
    <property type="RefSeq protein sequence ID" value="NP_056990.3"/>
</dbReference>
<dbReference type="UCSC" id="uc001eew.3">
    <molecule id="Q9UPN9-1"/>
    <property type="organism name" value="human"/>
</dbReference>
<dbReference type="AGR" id="HGNC:16290"/>
<dbReference type="CTD" id="51592"/>
<dbReference type="DisGeNET" id="51592"/>
<dbReference type="GeneCards" id="TRIM33"/>
<dbReference type="HGNC" id="HGNC:16290">
    <property type="gene designation" value="TRIM33"/>
</dbReference>
<dbReference type="HPA" id="ENSG00000197323">
    <property type="expression patterns" value="Low tissue specificity"/>
</dbReference>
<dbReference type="MalaCards" id="TRIM33"/>
<dbReference type="MIM" id="605769">
    <property type="type" value="gene"/>
</dbReference>
<dbReference type="neXtProt" id="NX_Q9UPN9"/>
<dbReference type="OpenTargets" id="ENSG00000197323"/>
<dbReference type="Orphanet" id="146">
    <property type="disease" value="Differentiated thyroid carcinoma"/>
</dbReference>
<dbReference type="PharmGKB" id="PA38118"/>
<dbReference type="VEuPathDB" id="HostDB:ENSG00000197323"/>
<dbReference type="eggNOG" id="KOG2177">
    <property type="taxonomic scope" value="Eukaryota"/>
</dbReference>
<dbReference type="GeneTree" id="ENSGT00940000156361"/>
<dbReference type="InParanoid" id="Q9UPN9"/>
<dbReference type="OMA" id="ICQNCVM"/>
<dbReference type="OrthoDB" id="1870062at2759"/>
<dbReference type="PAN-GO" id="Q9UPN9">
    <property type="GO annotations" value="0 GO annotations based on evolutionary models"/>
</dbReference>
<dbReference type="PhylomeDB" id="Q9UPN9"/>
<dbReference type="TreeFam" id="TF106455"/>
<dbReference type="PathwayCommons" id="Q9UPN9"/>
<dbReference type="Reactome" id="R-HSA-2173795">
    <property type="pathway name" value="Downregulation of SMAD2/3:SMAD4 transcriptional activity"/>
</dbReference>
<dbReference type="Reactome" id="R-HSA-9754189">
    <property type="pathway name" value="Germ layer formation at gastrulation"/>
</dbReference>
<dbReference type="SignaLink" id="Q9UPN9"/>
<dbReference type="SIGNOR" id="Q9UPN9"/>
<dbReference type="UniPathway" id="UPA00143"/>
<dbReference type="BioGRID-ORCS" id="51592">
    <property type="hits" value="47 hits in 1223 CRISPR screens"/>
</dbReference>
<dbReference type="ChiTaRS" id="TRIM33">
    <property type="organism name" value="human"/>
</dbReference>
<dbReference type="EvolutionaryTrace" id="Q9UPN9"/>
<dbReference type="GeneWiki" id="TRIM33"/>
<dbReference type="GenomeRNAi" id="51592"/>
<dbReference type="Pharos" id="Q9UPN9">
    <property type="development level" value="Tchem"/>
</dbReference>
<dbReference type="PRO" id="PR:Q9UPN9"/>
<dbReference type="Proteomes" id="UP000005640">
    <property type="component" value="Chromosome 1"/>
</dbReference>
<dbReference type="RNAct" id="Q9UPN9">
    <property type="molecule type" value="protein"/>
</dbReference>
<dbReference type="Bgee" id="ENSG00000197323">
    <property type="expression patterns" value="Expressed in endometrium epithelium and 209 other cell types or tissues"/>
</dbReference>
<dbReference type="ExpressionAtlas" id="Q9UPN9">
    <property type="expression patterns" value="baseline and differential"/>
</dbReference>
<dbReference type="GO" id="GO:0000785">
    <property type="term" value="C:chromatin"/>
    <property type="evidence" value="ECO:0000318"/>
    <property type="project" value="GO_Central"/>
</dbReference>
<dbReference type="GO" id="GO:0005654">
    <property type="term" value="C:nucleoplasm"/>
    <property type="evidence" value="ECO:0000304"/>
    <property type="project" value="Reactome"/>
</dbReference>
<dbReference type="GO" id="GO:0005634">
    <property type="term" value="C:nucleus"/>
    <property type="evidence" value="ECO:0000314"/>
    <property type="project" value="UniProtKB"/>
</dbReference>
<dbReference type="GO" id="GO:0070410">
    <property type="term" value="F:co-SMAD binding"/>
    <property type="evidence" value="ECO:0000353"/>
    <property type="project" value="BHF-UCL"/>
</dbReference>
<dbReference type="GO" id="GO:0003677">
    <property type="term" value="F:DNA binding"/>
    <property type="evidence" value="ECO:0007669"/>
    <property type="project" value="UniProtKB-KW"/>
</dbReference>
<dbReference type="GO" id="GO:0070412">
    <property type="term" value="F:R-SMAD binding"/>
    <property type="evidence" value="ECO:0000353"/>
    <property type="project" value="BHF-UCL"/>
</dbReference>
<dbReference type="GO" id="GO:0004842">
    <property type="term" value="F:ubiquitin-protein transferase activity"/>
    <property type="evidence" value="ECO:0000304"/>
    <property type="project" value="Reactome"/>
</dbReference>
<dbReference type="GO" id="GO:0008270">
    <property type="term" value="F:zinc ion binding"/>
    <property type="evidence" value="ECO:0007669"/>
    <property type="project" value="UniProtKB-KW"/>
</dbReference>
<dbReference type="GO" id="GO:0030514">
    <property type="term" value="P:negative regulation of BMP signaling pathway"/>
    <property type="evidence" value="ECO:0000314"/>
    <property type="project" value="UniProtKB"/>
</dbReference>
<dbReference type="GO" id="GO:0045892">
    <property type="term" value="P:negative regulation of DNA-templated transcription"/>
    <property type="evidence" value="ECO:0000303"/>
    <property type="project" value="UniProtKB"/>
</dbReference>
<dbReference type="GO" id="GO:0000122">
    <property type="term" value="P:negative regulation of transcription by RNA polymerase II"/>
    <property type="evidence" value="ECO:0000304"/>
    <property type="project" value="Reactome"/>
</dbReference>
<dbReference type="GO" id="GO:0016567">
    <property type="term" value="P:protein ubiquitination"/>
    <property type="evidence" value="ECO:0000314"/>
    <property type="project" value="UniProtKB"/>
</dbReference>
<dbReference type="GO" id="GO:0017015">
    <property type="term" value="P:regulation of transforming growth factor beta receptor signaling pathway"/>
    <property type="evidence" value="ECO:0000314"/>
    <property type="project" value="UniProtKB"/>
</dbReference>
<dbReference type="CDD" id="cd19847">
    <property type="entry name" value="Bbox1_TIF1g_C-VI"/>
    <property type="match status" value="1"/>
</dbReference>
<dbReference type="CDD" id="cd19830">
    <property type="entry name" value="Bbox2_TIF1g_C-VI"/>
    <property type="match status" value="1"/>
</dbReference>
<dbReference type="CDD" id="cd05502">
    <property type="entry name" value="Bromo_tif1_like"/>
    <property type="match status" value="1"/>
</dbReference>
<dbReference type="CDD" id="cd15624">
    <property type="entry name" value="PHD_TIF1gamma"/>
    <property type="match status" value="1"/>
</dbReference>
<dbReference type="CDD" id="cd16766">
    <property type="entry name" value="RING-HC_TIF1gamma"/>
    <property type="match status" value="1"/>
</dbReference>
<dbReference type="FunFam" id="3.30.40.10:FF:000123">
    <property type="entry name" value="E3 ubiquitin-protein ligase TRIM33"/>
    <property type="match status" value="1"/>
</dbReference>
<dbReference type="FunFam" id="3.30.40.10:FF:000246">
    <property type="entry name" value="E3 ubiquitin-protein ligase TRIM33 isoform X2"/>
    <property type="match status" value="1"/>
</dbReference>
<dbReference type="FunFam" id="1.20.920.10:FF:000024">
    <property type="entry name" value="Transcription intermediary factor 1-alpha"/>
    <property type="match status" value="1"/>
</dbReference>
<dbReference type="FunFam" id="3.30.160.60:FF:000074">
    <property type="entry name" value="Tripartite motif containing 66"/>
    <property type="match status" value="1"/>
</dbReference>
<dbReference type="Gene3D" id="1.20.920.10">
    <property type="entry name" value="Bromodomain-like"/>
    <property type="match status" value="1"/>
</dbReference>
<dbReference type="Gene3D" id="3.30.160.60">
    <property type="entry name" value="Classic Zinc Finger"/>
    <property type="match status" value="1"/>
</dbReference>
<dbReference type="Gene3D" id="3.30.40.10">
    <property type="entry name" value="Zinc/RING finger domain, C3HC4 (zinc finger)"/>
    <property type="match status" value="2"/>
</dbReference>
<dbReference type="IDEAL" id="IID00505"/>
<dbReference type="InterPro" id="IPR003649">
    <property type="entry name" value="Bbox_C"/>
</dbReference>
<dbReference type="InterPro" id="IPR001487">
    <property type="entry name" value="Bromodomain"/>
</dbReference>
<dbReference type="InterPro" id="IPR036427">
    <property type="entry name" value="Bromodomain-like_sf"/>
</dbReference>
<dbReference type="InterPro" id="IPR019786">
    <property type="entry name" value="Zinc_finger_PHD-type_CS"/>
</dbReference>
<dbReference type="InterPro" id="IPR000315">
    <property type="entry name" value="Znf_B-box"/>
</dbReference>
<dbReference type="InterPro" id="IPR011011">
    <property type="entry name" value="Znf_FYVE_PHD"/>
</dbReference>
<dbReference type="InterPro" id="IPR001965">
    <property type="entry name" value="Znf_PHD"/>
</dbReference>
<dbReference type="InterPro" id="IPR019787">
    <property type="entry name" value="Znf_PHD-finger"/>
</dbReference>
<dbReference type="InterPro" id="IPR001841">
    <property type="entry name" value="Znf_RING"/>
</dbReference>
<dbReference type="InterPro" id="IPR013083">
    <property type="entry name" value="Znf_RING/FYVE/PHD"/>
</dbReference>
<dbReference type="InterPro" id="IPR017907">
    <property type="entry name" value="Znf_RING_CS"/>
</dbReference>
<dbReference type="PANTHER" id="PTHR45915:SF3">
    <property type="entry name" value="E3 UBIQUITIN-PROTEIN LIGASE TRIM33"/>
    <property type="match status" value="1"/>
</dbReference>
<dbReference type="PANTHER" id="PTHR45915">
    <property type="entry name" value="TRANSCRIPTION INTERMEDIARY FACTOR"/>
    <property type="match status" value="1"/>
</dbReference>
<dbReference type="Pfam" id="PF00439">
    <property type="entry name" value="Bromodomain"/>
    <property type="match status" value="1"/>
</dbReference>
<dbReference type="Pfam" id="PF00628">
    <property type="entry name" value="PHD"/>
    <property type="match status" value="1"/>
</dbReference>
<dbReference type="Pfam" id="PF00643">
    <property type="entry name" value="zf-B_box"/>
    <property type="match status" value="1"/>
</dbReference>
<dbReference type="PRINTS" id="PR00503">
    <property type="entry name" value="BROMODOMAIN"/>
</dbReference>
<dbReference type="SMART" id="SM00502">
    <property type="entry name" value="BBC"/>
    <property type="match status" value="1"/>
</dbReference>
<dbReference type="SMART" id="SM00336">
    <property type="entry name" value="BBOX"/>
    <property type="match status" value="2"/>
</dbReference>
<dbReference type="SMART" id="SM00297">
    <property type="entry name" value="BROMO"/>
    <property type="match status" value="1"/>
</dbReference>
<dbReference type="SMART" id="SM00249">
    <property type="entry name" value="PHD"/>
    <property type="match status" value="2"/>
</dbReference>
<dbReference type="SMART" id="SM00184">
    <property type="entry name" value="RING"/>
    <property type="match status" value="2"/>
</dbReference>
<dbReference type="SUPFAM" id="SSF57845">
    <property type="entry name" value="B-box zinc-binding domain"/>
    <property type="match status" value="1"/>
</dbReference>
<dbReference type="SUPFAM" id="SSF47370">
    <property type="entry name" value="Bromodomain"/>
    <property type="match status" value="1"/>
</dbReference>
<dbReference type="SUPFAM" id="SSF57903">
    <property type="entry name" value="FYVE/PHD zinc finger"/>
    <property type="match status" value="1"/>
</dbReference>
<dbReference type="SUPFAM" id="SSF57850">
    <property type="entry name" value="RING/U-box"/>
    <property type="match status" value="1"/>
</dbReference>
<dbReference type="PROSITE" id="PS50014">
    <property type="entry name" value="BROMODOMAIN_2"/>
    <property type="match status" value="1"/>
</dbReference>
<dbReference type="PROSITE" id="PS50119">
    <property type="entry name" value="ZF_BBOX"/>
    <property type="match status" value="2"/>
</dbReference>
<dbReference type="PROSITE" id="PS01359">
    <property type="entry name" value="ZF_PHD_1"/>
    <property type="match status" value="1"/>
</dbReference>
<dbReference type="PROSITE" id="PS50016">
    <property type="entry name" value="ZF_PHD_2"/>
    <property type="match status" value="1"/>
</dbReference>
<dbReference type="PROSITE" id="PS00518">
    <property type="entry name" value="ZF_RING_1"/>
    <property type="match status" value="1"/>
</dbReference>
<dbReference type="PROSITE" id="PS50089">
    <property type="entry name" value="ZF_RING_2"/>
    <property type="match status" value="1"/>
</dbReference>
<evidence type="ECO:0000250" key="1"/>
<evidence type="ECO:0000250" key="2">
    <source>
        <dbReference type="UniProtKB" id="Q99PP7"/>
    </source>
</evidence>
<evidence type="ECO:0000255" key="3"/>
<evidence type="ECO:0000255" key="4">
    <source>
        <dbReference type="PROSITE-ProRule" id="PRU00024"/>
    </source>
</evidence>
<evidence type="ECO:0000255" key="5">
    <source>
        <dbReference type="PROSITE-ProRule" id="PRU00035"/>
    </source>
</evidence>
<evidence type="ECO:0000255" key="6">
    <source>
        <dbReference type="PROSITE-ProRule" id="PRU00146"/>
    </source>
</evidence>
<evidence type="ECO:0000255" key="7">
    <source>
        <dbReference type="PROSITE-ProRule" id="PRU00175"/>
    </source>
</evidence>
<evidence type="ECO:0000256" key="8">
    <source>
        <dbReference type="SAM" id="MobiDB-lite"/>
    </source>
</evidence>
<evidence type="ECO:0000269" key="9">
    <source>
    </source>
</evidence>
<evidence type="ECO:0000269" key="10">
    <source>
    </source>
</evidence>
<evidence type="ECO:0000269" key="11">
    <source>
    </source>
</evidence>
<evidence type="ECO:0000269" key="12">
    <source>
    </source>
</evidence>
<evidence type="ECO:0000269" key="13">
    <source>
    </source>
</evidence>
<evidence type="ECO:0000269" key="14">
    <source>
    </source>
</evidence>
<evidence type="ECO:0000269" key="15">
    <source>
    </source>
</evidence>
<evidence type="ECO:0000269" key="16">
    <source>
    </source>
</evidence>
<evidence type="ECO:0000269" key="17">
    <source>
    </source>
</evidence>
<evidence type="ECO:0000269" key="18">
    <source>
    </source>
</evidence>
<evidence type="ECO:0000303" key="19">
    <source>
    </source>
</evidence>
<evidence type="ECO:0000303" key="20">
    <source>
    </source>
</evidence>
<evidence type="ECO:0000305" key="21"/>
<evidence type="ECO:0007744" key="22">
    <source>
    </source>
</evidence>
<evidence type="ECO:0007744" key="23">
    <source>
    </source>
</evidence>
<evidence type="ECO:0007744" key="24">
    <source>
    </source>
</evidence>
<evidence type="ECO:0007744" key="25">
    <source>
    </source>
</evidence>
<evidence type="ECO:0007744" key="26">
    <source>
    </source>
</evidence>
<evidence type="ECO:0007744" key="27">
    <source>
    </source>
</evidence>
<evidence type="ECO:0007744" key="28">
    <source>
    </source>
</evidence>
<evidence type="ECO:0007744" key="29">
    <source>
    </source>
</evidence>
<evidence type="ECO:0007744" key="30">
    <source>
    </source>
</evidence>
<evidence type="ECO:0007744" key="31">
    <source>
    </source>
</evidence>
<evidence type="ECO:0007744" key="32">
    <source>
    </source>
</evidence>
<evidence type="ECO:0007829" key="33">
    <source>
        <dbReference type="PDB" id="3U5N"/>
    </source>
</evidence>
<evidence type="ECO:0007829" key="34">
    <source>
        <dbReference type="PDB" id="3U5O"/>
    </source>
</evidence>
<evidence type="ECO:0007829" key="35">
    <source>
        <dbReference type="PDB" id="3U5P"/>
    </source>
</evidence>
<evidence type="ECO:0007829" key="36">
    <source>
        <dbReference type="PDB" id="5MR8"/>
    </source>
</evidence>
<evidence type="ECO:0007829" key="37">
    <source>
        <dbReference type="PDB" id="7ZDD"/>
    </source>
</evidence>
<evidence type="ECO:0007829" key="38">
    <source>
        <dbReference type="PDB" id="8BDY"/>
    </source>
</evidence>
<reference key="1">
    <citation type="journal article" date="1999" name="Oncogene">
        <title>TIF1gamma, a novel member of the transcriptional intermediary factor 1 family.</title>
        <authorList>
            <person name="Venturini L."/>
            <person name="You J."/>
            <person name="Stadler M."/>
            <person name="Galien R."/>
            <person name="Lallemand V."/>
            <person name="Koken M.H.M."/>
            <person name="Mattei M.-G."/>
            <person name="Ganser A."/>
            <person name="Chambon P."/>
            <person name="Losson R."/>
            <person name="De The H."/>
        </authorList>
    </citation>
    <scope>NUCLEOTIDE SEQUENCE [MRNA] (ISOFORM ALPHA)</scope>
    <scope>FUNCTION</scope>
    <scope>SUBUNIT</scope>
    <scope>VARIANT THR-840</scope>
</reference>
<reference key="2">
    <citation type="journal article" date="2001" name="EMBO J.">
        <title>The tripartite motif family identifies cell compartments.</title>
        <authorList>
            <person name="Reymond A."/>
            <person name="Meroni G."/>
            <person name="Fantozzi A."/>
            <person name="Merla G."/>
            <person name="Cairo S."/>
            <person name="Luzi L."/>
            <person name="Riganelli D."/>
            <person name="Zanaria E."/>
            <person name="Messali S."/>
            <person name="Cainarca S."/>
            <person name="Guffanti A."/>
            <person name="Minucci S."/>
            <person name="Pelicci P.G."/>
            <person name="Ballabio A."/>
        </authorList>
    </citation>
    <scope>NUCLEOTIDE SEQUENCE [MRNA] (ISOFORMS ALPHA AND BETA)</scope>
    <scope>VARIANT THR-840</scope>
</reference>
<reference key="3">
    <citation type="journal article" date="1999" name="DNA Res.">
        <title>Prediction of the coding sequences of unidentified human genes. XIV. The complete sequences of 100 new cDNA clones from brain which code for large proteins in vitro.</title>
        <authorList>
            <person name="Kikuno R."/>
            <person name="Nagase T."/>
            <person name="Ishikawa K."/>
            <person name="Hirosawa M."/>
            <person name="Miyajima N."/>
            <person name="Tanaka A."/>
            <person name="Kotani H."/>
            <person name="Nomura N."/>
            <person name="Ohara O."/>
        </authorList>
    </citation>
    <scope>NUCLEOTIDE SEQUENCE [LARGE SCALE MRNA] (ISOFORM ALPHA)</scope>
    <scope>VARIANT THR-840</scope>
    <source>
        <tissue>Brain</tissue>
    </source>
</reference>
<reference key="4">
    <citation type="journal article" date="2006" name="Nature">
        <title>The DNA sequence and biological annotation of human chromosome 1.</title>
        <authorList>
            <person name="Gregory S.G."/>
            <person name="Barlow K.F."/>
            <person name="McLay K.E."/>
            <person name="Kaul R."/>
            <person name="Swarbreck D."/>
            <person name="Dunham A."/>
            <person name="Scott C.E."/>
            <person name="Howe K.L."/>
            <person name="Woodfine K."/>
            <person name="Spencer C.C.A."/>
            <person name="Jones M.C."/>
            <person name="Gillson C."/>
            <person name="Searle S."/>
            <person name="Zhou Y."/>
            <person name="Kokocinski F."/>
            <person name="McDonald L."/>
            <person name="Evans R."/>
            <person name="Phillips K."/>
            <person name="Atkinson A."/>
            <person name="Cooper R."/>
            <person name="Jones C."/>
            <person name="Hall R.E."/>
            <person name="Andrews T.D."/>
            <person name="Lloyd C."/>
            <person name="Ainscough R."/>
            <person name="Almeida J.P."/>
            <person name="Ambrose K.D."/>
            <person name="Anderson F."/>
            <person name="Andrew R.W."/>
            <person name="Ashwell R.I.S."/>
            <person name="Aubin K."/>
            <person name="Babbage A.K."/>
            <person name="Bagguley C.L."/>
            <person name="Bailey J."/>
            <person name="Beasley H."/>
            <person name="Bethel G."/>
            <person name="Bird C.P."/>
            <person name="Bray-Allen S."/>
            <person name="Brown J.Y."/>
            <person name="Brown A.J."/>
            <person name="Buckley D."/>
            <person name="Burton J."/>
            <person name="Bye J."/>
            <person name="Carder C."/>
            <person name="Chapman J.C."/>
            <person name="Clark S.Y."/>
            <person name="Clarke G."/>
            <person name="Clee C."/>
            <person name="Cobley V."/>
            <person name="Collier R.E."/>
            <person name="Corby N."/>
            <person name="Coville G.J."/>
            <person name="Davies J."/>
            <person name="Deadman R."/>
            <person name="Dunn M."/>
            <person name="Earthrowl M."/>
            <person name="Ellington A.G."/>
            <person name="Errington H."/>
            <person name="Frankish A."/>
            <person name="Frankland J."/>
            <person name="French L."/>
            <person name="Garner P."/>
            <person name="Garnett J."/>
            <person name="Gay L."/>
            <person name="Ghori M.R.J."/>
            <person name="Gibson R."/>
            <person name="Gilby L.M."/>
            <person name="Gillett W."/>
            <person name="Glithero R.J."/>
            <person name="Grafham D.V."/>
            <person name="Griffiths C."/>
            <person name="Griffiths-Jones S."/>
            <person name="Grocock R."/>
            <person name="Hammond S."/>
            <person name="Harrison E.S.I."/>
            <person name="Hart E."/>
            <person name="Haugen E."/>
            <person name="Heath P.D."/>
            <person name="Holmes S."/>
            <person name="Holt K."/>
            <person name="Howden P.J."/>
            <person name="Hunt A.R."/>
            <person name="Hunt S.E."/>
            <person name="Hunter G."/>
            <person name="Isherwood J."/>
            <person name="James R."/>
            <person name="Johnson C."/>
            <person name="Johnson D."/>
            <person name="Joy A."/>
            <person name="Kay M."/>
            <person name="Kershaw J.K."/>
            <person name="Kibukawa M."/>
            <person name="Kimberley A.M."/>
            <person name="King A."/>
            <person name="Knights A.J."/>
            <person name="Lad H."/>
            <person name="Laird G."/>
            <person name="Lawlor S."/>
            <person name="Leongamornlert D.A."/>
            <person name="Lloyd D.M."/>
            <person name="Loveland J."/>
            <person name="Lovell J."/>
            <person name="Lush M.J."/>
            <person name="Lyne R."/>
            <person name="Martin S."/>
            <person name="Mashreghi-Mohammadi M."/>
            <person name="Matthews L."/>
            <person name="Matthews N.S.W."/>
            <person name="McLaren S."/>
            <person name="Milne S."/>
            <person name="Mistry S."/>
            <person name="Moore M.J.F."/>
            <person name="Nickerson T."/>
            <person name="O'Dell C.N."/>
            <person name="Oliver K."/>
            <person name="Palmeiri A."/>
            <person name="Palmer S.A."/>
            <person name="Parker A."/>
            <person name="Patel D."/>
            <person name="Pearce A.V."/>
            <person name="Peck A.I."/>
            <person name="Pelan S."/>
            <person name="Phelps K."/>
            <person name="Phillimore B.J."/>
            <person name="Plumb R."/>
            <person name="Rajan J."/>
            <person name="Raymond C."/>
            <person name="Rouse G."/>
            <person name="Saenphimmachak C."/>
            <person name="Sehra H.K."/>
            <person name="Sheridan E."/>
            <person name="Shownkeen R."/>
            <person name="Sims S."/>
            <person name="Skuce C.D."/>
            <person name="Smith M."/>
            <person name="Steward C."/>
            <person name="Subramanian S."/>
            <person name="Sycamore N."/>
            <person name="Tracey A."/>
            <person name="Tromans A."/>
            <person name="Van Helmond Z."/>
            <person name="Wall M."/>
            <person name="Wallis J.M."/>
            <person name="White S."/>
            <person name="Whitehead S.L."/>
            <person name="Wilkinson J.E."/>
            <person name="Willey D.L."/>
            <person name="Williams H."/>
            <person name="Wilming L."/>
            <person name="Wray P.W."/>
            <person name="Wu Z."/>
            <person name="Coulson A."/>
            <person name="Vaudin M."/>
            <person name="Sulston J.E."/>
            <person name="Durbin R.M."/>
            <person name="Hubbard T."/>
            <person name="Wooster R."/>
            <person name="Dunham I."/>
            <person name="Carter N.P."/>
            <person name="McVean G."/>
            <person name="Ross M.T."/>
            <person name="Harrow J."/>
            <person name="Olson M.V."/>
            <person name="Beck S."/>
            <person name="Rogers J."/>
            <person name="Bentley D.R."/>
        </authorList>
    </citation>
    <scope>NUCLEOTIDE SEQUENCE [LARGE SCALE GENOMIC DNA]</scope>
</reference>
<reference key="5">
    <citation type="journal article" date="1999" name="Oncogene">
        <title>The transcription coactivator HTIF1 and a related protein are fused to the RET receptor tyrosine kinase in childhood papillary thyroid carcinomas.</title>
        <authorList>
            <person name="Klugbauer S."/>
            <person name="Rabes H.M."/>
        </authorList>
    </citation>
    <scope>NUCLEOTIDE SEQUENCE [MRNA] OF 76-1127 (ISOFORMS ALPHA AND BETA)</scope>
    <scope>CHROMOSOMAL TRANSLOCATION WITH RET</scope>
    <scope>VARIANT THR-840</scope>
    <source>
        <tissue>Thyroid</tissue>
    </source>
</reference>
<reference key="6">
    <citation type="journal article" date="2002" name="J. Mol. Biol.">
        <title>Hetero-oligomerization among the TIF family of RBCC/TRIM domain-containing nuclear cofactors: a potential mechanism for regulating the switch between coactivation and corepression.</title>
        <authorList>
            <person name="Peng H."/>
            <person name="Feldman I."/>
            <person name="Rauscher F.J. III"/>
        </authorList>
    </citation>
    <scope>SUBUNIT</scope>
</reference>
<reference key="7">
    <citation type="journal article" date="2005" name="Cell">
        <title>Germ-layer specification and control of cell growth by Ectodermin, a Smad4 ubiquitin ligase.</title>
        <authorList>
            <person name="Dupont S."/>
            <person name="Zacchigna L."/>
            <person name="Cordenonsi M."/>
            <person name="Soligo S."/>
            <person name="Adorno M."/>
            <person name="Rugge M."/>
            <person name="Piccolo S."/>
        </authorList>
    </citation>
    <scope>FUNCTION AS AN E3 UBIQUITIN-PROTEIN LIGASE</scope>
    <scope>UBIQUITINATION OF SMAD4</scope>
    <scope>INTERACTION WITH SMAD4</scope>
    <scope>MUTAGENESIS OF CYS-125 AND CYS-128</scope>
    <scope>SUBCELLULAR LOCATION</scope>
</reference>
<reference key="8">
    <citation type="journal article" date="2006" name="Cell">
        <title>Hematopoiesis controlled by distinct TIF1gamma and Smad4 branches of the TGFbeta pathway.</title>
        <authorList>
            <person name="He W."/>
            <person name="Dorn D.C."/>
            <person name="Erdjument-Bromage H."/>
            <person name="Tempst P."/>
            <person name="Moore M.A."/>
            <person name="Massague J."/>
        </authorList>
    </citation>
    <scope>FUNCTION</scope>
    <scope>IDENTIFICATION IN A COMPLEX WITH SMAD2 AND SMAD3</scope>
    <scope>INTERACTION WITH SMAD2 AND SMAD3</scope>
    <scope>SUBCELLULAR LOCATION</scope>
</reference>
<reference key="9">
    <citation type="journal article" date="2008" name="Proc. Natl. Acad. Sci. U.S.A.">
        <title>A quantitative atlas of mitotic phosphorylation.</title>
        <authorList>
            <person name="Dephoure N."/>
            <person name="Zhou C."/>
            <person name="Villen J."/>
            <person name="Beausoleil S.A."/>
            <person name="Bakalarski C.E."/>
            <person name="Elledge S.J."/>
            <person name="Gygi S.P."/>
        </authorList>
    </citation>
    <scope>PHOSPHORYLATION [LARGE SCALE ANALYSIS] AT SER-862; THR-1102 AND SER-1105</scope>
    <scope>IDENTIFICATION BY MASS SPECTROMETRY [LARGE SCALE ANALYSIS]</scope>
    <source>
        <tissue>Cervix carcinoma</tissue>
    </source>
</reference>
<reference key="10">
    <citation type="journal article" date="2009" name="Cell">
        <title>FAM/USP9x, a deubiquitinating enzyme essential for TGFbeta signaling, controls Smad4 monoubiquitination.</title>
        <authorList>
            <person name="Dupont S."/>
            <person name="Mamidi A."/>
            <person name="Cordenonsi M."/>
            <person name="Montagner M."/>
            <person name="Zacchigna L."/>
            <person name="Adorno M."/>
            <person name="Martello G."/>
            <person name="Stinchfield M.J."/>
            <person name="Soligo S."/>
            <person name="Morsut L."/>
            <person name="Inui M."/>
            <person name="Moro S."/>
            <person name="Modena N."/>
            <person name="Argenton F."/>
            <person name="Newfeld S.J."/>
            <person name="Piccolo S."/>
        </authorList>
    </citation>
    <scope>FUNCTION</scope>
    <scope>SUBCELLULAR LOCATION</scope>
    <scope>INTERACTION WITH SMAD2 AND SMAD4</scope>
</reference>
<reference key="11">
    <citation type="journal article" date="2009" name="Science">
        <title>Lysine acetylation targets protein complexes and co-regulates major cellular functions.</title>
        <authorList>
            <person name="Choudhary C."/>
            <person name="Kumar C."/>
            <person name="Gnad F."/>
            <person name="Nielsen M.L."/>
            <person name="Rehman M."/>
            <person name="Walther T.C."/>
            <person name="Olsen J.V."/>
            <person name="Mann M."/>
        </authorList>
    </citation>
    <scope>ACETYLATION [LARGE SCALE ANALYSIS] AT LYS-763; LYS-769 AND LYS-953</scope>
    <scope>IDENTIFICATION BY MASS SPECTROMETRY [LARGE SCALE ANALYSIS]</scope>
</reference>
<reference key="12">
    <citation type="journal article" date="2010" name="Sci. Signal.">
        <title>Quantitative phosphoproteomics reveals widespread full phosphorylation site occupancy during mitosis.</title>
        <authorList>
            <person name="Olsen J.V."/>
            <person name="Vermeulen M."/>
            <person name="Santamaria A."/>
            <person name="Kumar C."/>
            <person name="Miller M.L."/>
            <person name="Jensen L.J."/>
            <person name="Gnad F."/>
            <person name="Cox J."/>
            <person name="Jensen T.S."/>
            <person name="Nigg E.A."/>
            <person name="Brunak S."/>
            <person name="Mann M."/>
        </authorList>
    </citation>
    <scope>PHOSPHORYLATION [LARGE SCALE ANALYSIS] AT SER-862; THR-1102 AND SER-1105</scope>
    <scope>IDENTIFICATION BY MASS SPECTROMETRY [LARGE SCALE ANALYSIS]</scope>
    <source>
        <tissue>Cervix carcinoma</tissue>
    </source>
</reference>
<reference key="13">
    <citation type="journal article" date="2011" name="BMC Syst. Biol.">
        <title>Initial characterization of the human central proteome.</title>
        <authorList>
            <person name="Burkard T.R."/>
            <person name="Planyavsky M."/>
            <person name="Kaupe I."/>
            <person name="Breitwieser F.P."/>
            <person name="Buerckstuemmer T."/>
            <person name="Bennett K.L."/>
            <person name="Superti-Furga G."/>
            <person name="Colinge J."/>
        </authorList>
    </citation>
    <scope>IDENTIFICATION BY MASS SPECTROMETRY [LARGE SCALE ANALYSIS]</scope>
</reference>
<reference key="14">
    <citation type="journal article" date="2011" name="Sci. Signal.">
        <title>System-wide temporal characterization of the proteome and phosphoproteome of human embryonic stem cell differentiation.</title>
        <authorList>
            <person name="Rigbolt K.T."/>
            <person name="Prokhorova T.A."/>
            <person name="Akimov V."/>
            <person name="Henningsen J."/>
            <person name="Johansen P.T."/>
            <person name="Kratchmarova I."/>
            <person name="Kassem M."/>
            <person name="Mann M."/>
            <person name="Olsen J.V."/>
            <person name="Blagoev B."/>
        </authorList>
    </citation>
    <scope>PHOSPHORYLATION [LARGE SCALE ANALYSIS] AT SER-862; THR-1102 AND SER-1105</scope>
    <scope>IDENTIFICATION BY MASS SPECTROMETRY [LARGE SCALE ANALYSIS]</scope>
</reference>
<reference key="15">
    <citation type="journal article" date="2013" name="J. Proteome Res.">
        <title>Toward a comprehensive characterization of a human cancer cell phosphoproteome.</title>
        <authorList>
            <person name="Zhou H."/>
            <person name="Di Palma S."/>
            <person name="Preisinger C."/>
            <person name="Peng M."/>
            <person name="Polat A.N."/>
            <person name="Heck A.J."/>
            <person name="Mohammed S."/>
        </authorList>
    </citation>
    <scope>PHOSPHORYLATION [LARGE SCALE ANALYSIS] AT SER-862; THR-1051 AND SER-1119</scope>
    <scope>IDENTIFICATION BY MASS SPECTROMETRY [LARGE SCALE ANALYSIS]</scope>
    <source>
        <tissue>Cervix carcinoma</tissue>
        <tissue>Erythroleukemia</tissue>
    </source>
</reference>
<reference key="16">
    <citation type="journal article" date="2014" name="J. Proteomics">
        <title>An enzyme assisted RP-RPLC approach for in-depth analysis of human liver phosphoproteome.</title>
        <authorList>
            <person name="Bian Y."/>
            <person name="Song C."/>
            <person name="Cheng K."/>
            <person name="Dong M."/>
            <person name="Wang F."/>
            <person name="Huang J."/>
            <person name="Sun D."/>
            <person name="Wang L."/>
            <person name="Ye M."/>
            <person name="Zou H."/>
        </authorList>
    </citation>
    <scope>IDENTIFICATION BY MASS SPECTROMETRY [LARGE SCALE ANALYSIS]</scope>
    <source>
        <tissue>Liver</tissue>
    </source>
</reference>
<reference key="17">
    <citation type="journal article" date="2014" name="Mol. Cell. Proteomics">
        <title>Immunoaffinity enrichment and mass spectrometry analysis of protein methylation.</title>
        <authorList>
            <person name="Guo A."/>
            <person name="Gu H."/>
            <person name="Zhou J."/>
            <person name="Mulhern D."/>
            <person name="Wang Y."/>
            <person name="Lee K.A."/>
            <person name="Yang V."/>
            <person name="Aguiar M."/>
            <person name="Kornhauser J."/>
            <person name="Jia X."/>
            <person name="Ren J."/>
            <person name="Beausoleil S.A."/>
            <person name="Silva J.C."/>
            <person name="Vemulapalli V."/>
            <person name="Bedford M.T."/>
            <person name="Comb M.J."/>
        </authorList>
    </citation>
    <scope>METHYLATION [LARGE SCALE ANALYSIS] AT ARG-515; ARG-535; ARG-577; ARG-591; ARG-598 AND ARG-604</scope>
    <scope>IDENTIFICATION BY MASS SPECTROMETRY [LARGE SCALE ANALYSIS]</scope>
    <source>
        <tissue>Colon carcinoma</tissue>
    </source>
</reference>
<reference key="18">
    <citation type="journal article" date="2014" name="Nat. Struct. Mol. Biol.">
        <title>Uncovering global SUMOylation signaling networks in a site-specific manner.</title>
        <authorList>
            <person name="Hendriks I.A."/>
            <person name="D'Souza R.C."/>
            <person name="Yang B."/>
            <person name="Verlaan-de Vries M."/>
            <person name="Mann M."/>
            <person name="Vertegaal A.C."/>
        </authorList>
    </citation>
    <scope>SUMOYLATION [LARGE SCALE ANALYSIS] AT LYS-334; LYS-763; LYS-769; LYS-776; LYS-793; LYS-953; LYS-1007 AND LYS-1057</scope>
    <scope>IDENTIFICATION BY MASS SPECTROMETRY [LARGE SCALE ANALYSIS]</scope>
</reference>
<reference key="19">
    <citation type="journal article" date="2014" name="Proc. Natl. Acad. Sci. U.S.A.">
        <title>Mapping of SUMO sites and analysis of SUMOylation changes induced by external stimuli.</title>
        <authorList>
            <person name="Impens F."/>
            <person name="Radoshevich L."/>
            <person name="Cossart P."/>
            <person name="Ribet D."/>
        </authorList>
    </citation>
    <scope>SUMOYLATION [LARGE SCALE ANALYSIS] AT LYS-776 AND LYS-793</scope>
    <scope>IDENTIFICATION BY MASS SPECTROMETRY [LARGE SCALE ANALYSIS]</scope>
</reference>
<reference key="20">
    <citation type="journal article" date="2015" name="Cell Rep.">
        <title>SUMO-2 orchestrates chromatin modifiers in response to DNA damage.</title>
        <authorList>
            <person name="Hendriks I.A."/>
            <person name="Treffers L.W."/>
            <person name="Verlaan-de Vries M."/>
            <person name="Olsen J.V."/>
            <person name="Vertegaal A.C."/>
        </authorList>
    </citation>
    <scope>SUMOYLATION [LARGE SCALE ANALYSIS] AT LYS-763; LYS-769; LYS-776; LYS-793; LYS-861; LYS-1057 AND LYS-1118</scope>
    <scope>IDENTIFICATION BY MASS SPECTROMETRY [LARGE SCALE ANALYSIS]</scope>
</reference>
<reference key="21">
    <citation type="journal article" date="2015" name="Genes Dev.">
        <title>Screen identifies bromodomain protein ZMYND8 in chromatin recognition of transcription-associated DNA damage that promotes homologous recombination.</title>
        <authorList>
            <person name="Gong F."/>
            <person name="Chiu L.Y."/>
            <person name="Cox B."/>
            <person name="Aymard F."/>
            <person name="Clouaire T."/>
            <person name="Leung J.W."/>
            <person name="Cammarata M."/>
            <person name="Perez M."/>
            <person name="Agarwal P."/>
            <person name="Brodbelt J.S."/>
            <person name="Legube G."/>
            <person name="Miller K.M."/>
        </authorList>
    </citation>
    <scope>SUBCELLULAR LOCATION</scope>
</reference>
<reference key="22">
    <citation type="journal article" date="2015" name="Mol. Cell. Proteomics">
        <title>System-wide analysis of SUMOylation dynamics in response to replication stress reveals novel small ubiquitin-like modified target proteins and acceptor lysines relevant for genome stability.</title>
        <authorList>
            <person name="Xiao Z."/>
            <person name="Chang J.G."/>
            <person name="Hendriks I.A."/>
            <person name="Sigurdsson J.O."/>
            <person name="Olsen J.V."/>
            <person name="Vertegaal A.C."/>
        </authorList>
    </citation>
    <scope>SUMOYLATION [LARGE SCALE ANALYSIS] AT LYS-763; LYS-769; LYS-776; LYS-793 AND LYS-1057</scope>
    <scope>IDENTIFICATION BY MASS SPECTROMETRY [LARGE SCALE ANALYSIS]</scope>
</reference>
<reference key="23">
    <citation type="journal article" date="2017" name="Nat. Struct. Mol. Biol.">
        <title>Site-specific mapping of the human SUMO proteome reveals co-modification with phosphorylation.</title>
        <authorList>
            <person name="Hendriks I.A."/>
            <person name="Lyon D."/>
            <person name="Young C."/>
            <person name="Jensen L.J."/>
            <person name="Vertegaal A.C."/>
            <person name="Nielsen M.L."/>
        </authorList>
    </citation>
    <scope>SUMOYLATION [LARGE SCALE ANALYSIS] AT LYS-329; LYS-481; LYS-504; LYS-527; LYS-763; LYS-769; LYS-774; LYS-776; LYS-793; LYS-796; LYS-861; LYS-953; LYS-1043; LYS-1057 AND LYS-1118</scope>
    <scope>IDENTIFICATION BY MASS SPECTROMETRY [LARGE SCALE ANALYSIS]</scope>
</reference>
<reference key="24">
    <citation type="journal article" date="2007" name="Nature">
        <title>Patterns of somatic mutation in human cancer genomes.</title>
        <authorList>
            <person name="Greenman C."/>
            <person name="Stephens P."/>
            <person name="Smith R."/>
            <person name="Dalgliesh G.L."/>
            <person name="Hunter C."/>
            <person name="Bignell G."/>
            <person name="Davies H."/>
            <person name="Teague J."/>
            <person name="Butler A."/>
            <person name="Stevens C."/>
            <person name="Edkins S."/>
            <person name="O'Meara S."/>
            <person name="Vastrik I."/>
            <person name="Schmidt E.E."/>
            <person name="Avis T."/>
            <person name="Barthorpe S."/>
            <person name="Bhamra G."/>
            <person name="Buck G."/>
            <person name="Choudhury B."/>
            <person name="Clements J."/>
            <person name="Cole J."/>
            <person name="Dicks E."/>
            <person name="Forbes S."/>
            <person name="Gray K."/>
            <person name="Halliday K."/>
            <person name="Harrison R."/>
            <person name="Hills K."/>
            <person name="Hinton J."/>
            <person name="Jenkinson A."/>
            <person name="Jones D."/>
            <person name="Menzies A."/>
            <person name="Mironenko T."/>
            <person name="Perry J."/>
            <person name="Raine K."/>
            <person name="Richardson D."/>
            <person name="Shepherd R."/>
            <person name="Small A."/>
            <person name="Tofts C."/>
            <person name="Varian J."/>
            <person name="Webb T."/>
            <person name="West S."/>
            <person name="Widaa S."/>
            <person name="Yates A."/>
            <person name="Cahill D.P."/>
            <person name="Louis D.N."/>
            <person name="Goldstraw P."/>
            <person name="Nicholson A.G."/>
            <person name="Brasseur F."/>
            <person name="Looijenga L."/>
            <person name="Weber B.L."/>
            <person name="Chiew Y.-E."/>
            <person name="DeFazio A."/>
            <person name="Greaves M.F."/>
            <person name="Green A.R."/>
            <person name="Campbell P."/>
            <person name="Birney E."/>
            <person name="Easton D.F."/>
            <person name="Chenevix-Trench G."/>
            <person name="Tan M.-H."/>
            <person name="Khoo S.K."/>
            <person name="Teh B.T."/>
            <person name="Yuen S.T."/>
            <person name="Leung S.Y."/>
            <person name="Wooster R."/>
            <person name="Futreal P.A."/>
            <person name="Stratton M.R."/>
        </authorList>
    </citation>
    <scope>VARIANTS [LARGE SCALE ANALYSIS] ILE-580; SER-696; LYS-811; SER-885; MET-961 AND THR-1090</scope>
</reference>
<feature type="chain" id="PRO_0000056395" description="E3 ubiquitin-protein ligase TRIM33">
    <location>
        <begin position="1"/>
        <end position="1127"/>
    </location>
</feature>
<feature type="domain" description="Bromo" evidence="5">
    <location>
        <begin position="957"/>
        <end position="1080"/>
    </location>
</feature>
<feature type="zinc finger region" description="RING-type" evidence="7">
    <location>
        <begin position="125"/>
        <end position="154"/>
    </location>
</feature>
<feature type="zinc finger region" description="B box-type 1" evidence="4">
    <location>
        <begin position="212"/>
        <end position="259"/>
    </location>
</feature>
<feature type="zinc finger region" description="B box-type 2" evidence="4">
    <location>
        <begin position="271"/>
        <end position="312"/>
    </location>
</feature>
<feature type="zinc finger region" description="PHD-type" evidence="6">
    <location>
        <begin position="887"/>
        <end position="934"/>
    </location>
</feature>
<feature type="region of interest" description="Necessary for E3 ubiquitin-protein ligase activity and repression of SMAD4 signaling and transcriptional repression">
    <location>
        <begin position="1"/>
        <end position="147"/>
    </location>
</feature>
<feature type="region of interest" description="Disordered" evidence="8">
    <location>
        <begin position="1"/>
        <end position="118"/>
    </location>
</feature>
<feature type="region of interest" description="Necessary for oligomerization">
    <location>
        <begin position="299"/>
        <end position="401"/>
    </location>
</feature>
<feature type="region of interest" description="Disordered" evidence="8">
    <location>
        <begin position="536"/>
        <end position="563"/>
    </location>
</feature>
<feature type="region of interest" description="Disordered" evidence="8">
    <location>
        <begin position="608"/>
        <end position="629"/>
    </location>
</feature>
<feature type="region of interest" description="Disordered" evidence="8">
    <location>
        <begin position="673"/>
        <end position="692"/>
    </location>
</feature>
<feature type="region of interest" description="Disordered" evidence="8">
    <location>
        <begin position="703"/>
        <end position="818"/>
    </location>
</feature>
<feature type="region of interest" description="Disordered" evidence="8">
    <location>
        <begin position="1088"/>
        <end position="1127"/>
    </location>
</feature>
<feature type="coiled-coil region" evidence="3">
    <location>
        <begin position="299"/>
        <end position="401"/>
    </location>
</feature>
<feature type="compositionally biased region" description="Gly residues" evidence="8">
    <location>
        <begin position="1"/>
        <end position="18"/>
    </location>
</feature>
<feature type="compositionally biased region" description="Low complexity" evidence="8">
    <location>
        <begin position="19"/>
        <end position="37"/>
    </location>
</feature>
<feature type="compositionally biased region" description="Gly residues" evidence="8">
    <location>
        <begin position="52"/>
        <end position="64"/>
    </location>
</feature>
<feature type="compositionally biased region" description="Low complexity" evidence="8">
    <location>
        <begin position="65"/>
        <end position="97"/>
    </location>
</feature>
<feature type="compositionally biased region" description="Pro residues" evidence="8">
    <location>
        <begin position="98"/>
        <end position="118"/>
    </location>
</feature>
<feature type="compositionally biased region" description="Low complexity" evidence="8">
    <location>
        <begin position="723"/>
        <end position="759"/>
    </location>
</feature>
<feature type="compositionally biased region" description="Basic and acidic residues" evidence="8">
    <location>
        <begin position="793"/>
        <end position="802"/>
    </location>
</feature>
<feature type="compositionally biased region" description="Low complexity" evidence="8">
    <location>
        <begin position="807"/>
        <end position="818"/>
    </location>
</feature>
<feature type="compositionally biased region" description="Acidic residues" evidence="8">
    <location>
        <begin position="1092"/>
        <end position="1109"/>
    </location>
</feature>
<feature type="compositionally biased region" description="Basic and acidic residues" evidence="8">
    <location>
        <begin position="1118"/>
        <end position="1127"/>
    </location>
</feature>
<feature type="binding site" evidence="4">
    <location>
        <position position="217"/>
    </location>
    <ligand>
        <name>Zn(2+)</name>
        <dbReference type="ChEBI" id="CHEBI:29105"/>
        <label>1</label>
    </ligand>
</feature>
<feature type="binding site" evidence="4">
    <location>
        <position position="220"/>
    </location>
    <ligand>
        <name>Zn(2+)</name>
        <dbReference type="ChEBI" id="CHEBI:29105"/>
        <label>1</label>
    </ligand>
</feature>
<feature type="binding site" evidence="4">
    <location>
        <position position="241"/>
    </location>
    <ligand>
        <name>Zn(2+)</name>
        <dbReference type="ChEBI" id="CHEBI:29105"/>
        <label>1</label>
    </ligand>
</feature>
<feature type="binding site" evidence="4">
    <location>
        <position position="245"/>
    </location>
    <ligand>
        <name>Zn(2+)</name>
        <dbReference type="ChEBI" id="CHEBI:29105"/>
        <label>1</label>
    </ligand>
</feature>
<feature type="binding site" evidence="4">
    <location>
        <position position="276"/>
    </location>
    <ligand>
        <name>Zn(2+)</name>
        <dbReference type="ChEBI" id="CHEBI:29105"/>
        <label>2</label>
    </ligand>
</feature>
<feature type="binding site" evidence="4">
    <location>
        <position position="279"/>
    </location>
    <ligand>
        <name>Zn(2+)</name>
        <dbReference type="ChEBI" id="CHEBI:29105"/>
        <label>2</label>
    </ligand>
</feature>
<feature type="binding site" evidence="4">
    <location>
        <position position="299"/>
    </location>
    <ligand>
        <name>Zn(2+)</name>
        <dbReference type="ChEBI" id="CHEBI:29105"/>
        <label>2</label>
    </ligand>
</feature>
<feature type="binding site" evidence="4">
    <location>
        <position position="304"/>
    </location>
    <ligand>
        <name>Zn(2+)</name>
        <dbReference type="ChEBI" id="CHEBI:29105"/>
        <label>2</label>
    </ligand>
</feature>
<feature type="site" description="Breakpoint for translocation to form TRIM33-RET oncogene">
    <location>
        <begin position="964"/>
        <end position="965"/>
    </location>
</feature>
<feature type="modified residue" description="Asymmetric dimethylarginine; alternate" evidence="27">
    <location>
        <position position="515"/>
    </location>
</feature>
<feature type="modified residue" description="Omega-N-methylarginine; alternate" evidence="27">
    <location>
        <position position="515"/>
    </location>
</feature>
<feature type="modified residue" description="Omega-N-methylarginine" evidence="27">
    <location>
        <position position="535"/>
    </location>
</feature>
<feature type="modified residue" description="Asymmetric dimethylarginine" evidence="27">
    <location>
        <position position="577"/>
    </location>
</feature>
<feature type="modified residue" description="Asymmetric dimethylarginine; alternate" evidence="2">
    <location>
        <position position="591"/>
    </location>
</feature>
<feature type="modified residue" description="Omega-N-methylarginine; alternate" evidence="27">
    <location>
        <position position="591"/>
    </location>
</feature>
<feature type="modified residue" description="Asymmetric dimethylarginine" evidence="27">
    <location>
        <position position="598"/>
    </location>
</feature>
<feature type="modified residue" description="Asymmetric dimethylarginine" evidence="27">
    <location>
        <position position="604"/>
    </location>
</feature>
<feature type="modified residue" description="N6-acetyllysine; alternate" evidence="23">
    <location>
        <position position="763"/>
    </location>
</feature>
<feature type="modified residue" description="N6-acetyllysine; alternate" evidence="23">
    <location>
        <position position="769"/>
    </location>
</feature>
<feature type="modified residue" description="N6-acetyllysine; alternate" evidence="2">
    <location>
        <position position="793"/>
    </location>
</feature>
<feature type="modified residue" description="Phosphoserine" evidence="2">
    <location>
        <position position="803"/>
    </location>
</feature>
<feature type="modified residue" description="Phosphothreonine" evidence="2">
    <location>
        <position position="815"/>
    </location>
</feature>
<feature type="modified residue" description="Phosphoserine" evidence="22 24 25 26">
    <location>
        <position position="862"/>
    </location>
</feature>
<feature type="modified residue" description="N6-acetyllysine" evidence="2">
    <location>
        <position position="951"/>
    </location>
</feature>
<feature type="modified residue" description="N6-acetyllysine; alternate" evidence="23">
    <location>
        <position position="953"/>
    </location>
</feature>
<feature type="modified residue" description="Phosphothreonine" evidence="26">
    <location>
        <position position="1051"/>
    </location>
</feature>
<feature type="modified residue" description="Phosphothreonine" evidence="22 24 25">
    <location>
        <position position="1102"/>
    </location>
</feature>
<feature type="modified residue" description="Phosphoserine" evidence="22 24 25">
    <location>
        <position position="1105"/>
    </location>
</feature>
<feature type="modified residue" description="Phosphoserine" evidence="26">
    <location>
        <position position="1119"/>
    </location>
</feature>
<feature type="cross-link" description="Glycyl lysine isopeptide (Lys-Gly) (interchain with G-Cter in SUMO2)" evidence="32">
    <location>
        <position position="329"/>
    </location>
</feature>
<feature type="cross-link" description="Glycyl lysine isopeptide (Lys-Gly) (interchain with G-Cter in SUMO2)" evidence="29">
    <location>
        <position position="334"/>
    </location>
</feature>
<feature type="cross-link" description="Glycyl lysine isopeptide (Lys-Gly) (interchain with G-Cter in SUMO2)" evidence="32">
    <location>
        <position position="481"/>
    </location>
</feature>
<feature type="cross-link" description="Glycyl lysine isopeptide (Lys-Gly) (interchain with G-Cter in SUMO2)" evidence="32">
    <location>
        <position position="504"/>
    </location>
</feature>
<feature type="cross-link" description="Glycyl lysine isopeptide (Lys-Gly) (interchain with G-Cter in SUMO2)" evidence="32">
    <location>
        <position position="527"/>
    </location>
</feature>
<feature type="cross-link" description="Glycyl lysine isopeptide (Lys-Gly) (interchain with G-Cter in SUMO2); alternate" evidence="29 30 31 32">
    <location>
        <position position="763"/>
    </location>
</feature>
<feature type="cross-link" description="Glycyl lysine isopeptide (Lys-Gly) (interchain with G-Cter in SUMO2); alternate" evidence="29 30 31 32">
    <location>
        <position position="769"/>
    </location>
</feature>
<feature type="cross-link" description="Glycyl lysine isopeptide (Lys-Gly) (interchain with G-Cter in SUMO2)" evidence="32">
    <location>
        <position position="774"/>
    </location>
</feature>
<feature type="cross-link" description="Glycyl lysine isopeptide (Lys-Gly) (interchain with G-Cter in SUMO1); alternate" evidence="28">
    <location>
        <position position="776"/>
    </location>
</feature>
<feature type="cross-link" description="Glycyl lysine isopeptide (Lys-Gly) (interchain with G-Cter in SUMO2); alternate" evidence="28 29 30 31 32">
    <location>
        <position position="776"/>
    </location>
</feature>
<feature type="cross-link" description="Glycyl lysine isopeptide (Lys-Gly) (interchain with G-Cter in SUMO1); alternate" evidence="28">
    <location>
        <position position="793"/>
    </location>
</feature>
<feature type="cross-link" description="Glycyl lysine isopeptide (Lys-Gly) (interchain with G-Cter in SUMO2); alternate" evidence="28 29 30 31 32">
    <location>
        <position position="793"/>
    </location>
</feature>
<feature type="cross-link" description="Glycyl lysine isopeptide (Lys-Gly) (interchain with G-Cter in SUMO2)" evidence="32">
    <location>
        <position position="796"/>
    </location>
</feature>
<feature type="cross-link" description="Glycyl lysine isopeptide (Lys-Gly) (interchain with G-Cter in SUMO2)" evidence="31 32">
    <location>
        <position position="861"/>
    </location>
</feature>
<feature type="cross-link" description="Glycyl lysine isopeptide (Lys-Gly) (interchain with G-Cter in SUMO2); alternate" evidence="29 32">
    <location>
        <position position="953"/>
    </location>
</feature>
<feature type="cross-link" description="Glycyl lysine isopeptide (Lys-Gly) (interchain with G-Cter in SUMO2)" evidence="29">
    <location>
        <position position="1007"/>
    </location>
</feature>
<feature type="cross-link" description="Glycyl lysine isopeptide (Lys-Gly) (interchain with G-Cter in SUMO2)" evidence="32">
    <location>
        <position position="1043"/>
    </location>
</feature>
<feature type="cross-link" description="Glycyl lysine isopeptide (Lys-Gly) (interchain with G-Cter in SUMO2)" evidence="29 30 31 32">
    <location>
        <position position="1057"/>
    </location>
</feature>
<feature type="cross-link" description="Glycyl lysine isopeptide (Lys-Gly) (interchain with G-Cter in SUMO2)" evidence="31 32">
    <location>
        <position position="1118"/>
    </location>
</feature>
<feature type="splice variant" id="VSP_005774" description="In isoform Beta." evidence="19 20">
    <location>
        <begin position="1041"/>
        <end position="1057"/>
    </location>
</feature>
<feature type="sequence variant" id="VAR_029494" description="In dbSNP:rs6691166.">
    <original>V</original>
    <variation>A</variation>
    <location>
        <position position="67"/>
    </location>
</feature>
<feature type="sequence variant" id="VAR_042376" description="In a glioblastoma multiforme sample; somatic mutation." evidence="16">
    <original>M</original>
    <variation>I</variation>
    <location>
        <position position="580"/>
    </location>
</feature>
<feature type="sequence variant" id="VAR_042377" description="In dbSNP:rs56151583." evidence="16">
    <original>L</original>
    <variation>S</variation>
    <location>
        <position position="696"/>
    </location>
</feature>
<feature type="sequence variant" id="VAR_042378" description="In a lung adenocarcinoma sample; somatic mutation." evidence="16">
    <original>E</original>
    <variation>K</variation>
    <location>
        <position position="811"/>
    </location>
</feature>
<feature type="sequence variant" id="VAR_024616" description="In dbSNP:rs6537825." evidence="9 10 11 12">
    <original>I</original>
    <variation>T</variation>
    <location>
        <position position="840"/>
    </location>
</feature>
<feature type="sequence variant" id="VAR_042379" description="In a glioblastoma multiforme sample; somatic mutation." evidence="16">
    <original>P</original>
    <variation>S</variation>
    <location>
        <position position="885"/>
    </location>
</feature>
<feature type="sequence variant" id="VAR_042380" description="In dbSNP:rs55688622." evidence="16">
    <original>V</original>
    <variation>M</variation>
    <location>
        <position position="961"/>
    </location>
</feature>
<feature type="sequence variant" id="VAR_042381" description="In dbSNP:rs55784699." evidence="16">
    <original>P</original>
    <variation>T</variation>
    <location>
        <position position="1090"/>
    </location>
</feature>
<feature type="mutagenesis site" description="Abolishes E3 activity but does not affect interaction with SMAD4; when associated with A-128." evidence="14">
    <original>C</original>
    <variation>A</variation>
    <location>
        <position position="125"/>
    </location>
</feature>
<feature type="mutagenesis site" description="Abolishes E3 activity but does not affect interaction with SMAD4; when associated with A-125." evidence="14">
    <original>C</original>
    <variation>A</variation>
    <location>
        <position position="128"/>
    </location>
</feature>
<feature type="sequence conflict" description="In Ref. 5; CAB55313." evidence="21" ref="5">
    <original>V</original>
    <variation>E</variation>
    <location>
        <position position="89"/>
    </location>
</feature>
<feature type="sequence conflict" description="In Ref. 5; CAB55313." evidence="21" ref="5">
    <original>PAA</original>
    <variation>LLH</variation>
    <location>
        <begin position="451"/>
        <end position="453"/>
    </location>
</feature>
<feature type="sequence conflict" description="In Ref. 5; CAB55313." evidence="21" ref="5">
    <original>F</original>
    <variation>S</variation>
    <location>
        <position position="909"/>
    </location>
</feature>
<feature type="sequence conflict" description="In Ref. 1; AAD17259." evidence="21" ref="1">
    <original>R</original>
    <variation>T</variation>
    <location>
        <position position="1037"/>
    </location>
</feature>
<feature type="strand" evidence="33">
    <location>
        <begin position="888"/>
        <end position="890"/>
    </location>
</feature>
<feature type="turn" evidence="37">
    <location>
        <begin position="891"/>
        <end position="893"/>
    </location>
</feature>
<feature type="strand" evidence="37">
    <location>
        <begin position="897"/>
        <end position="901"/>
    </location>
</feature>
<feature type="strand" evidence="37">
    <location>
        <begin position="903"/>
        <end position="906"/>
    </location>
</feature>
<feature type="turn" evidence="37">
    <location>
        <begin position="911"/>
        <end position="913"/>
    </location>
</feature>
<feature type="strand" evidence="37">
    <location>
        <begin position="914"/>
        <end position="916"/>
    </location>
</feature>
<feature type="strand" evidence="35">
    <location>
        <begin position="918"/>
        <end position="920"/>
    </location>
</feature>
<feature type="turn" evidence="37">
    <location>
        <begin position="929"/>
        <end position="931"/>
    </location>
</feature>
<feature type="strand" evidence="37">
    <location>
        <begin position="934"/>
        <end position="936"/>
    </location>
</feature>
<feature type="helix" evidence="36">
    <location>
        <begin position="944"/>
        <end position="949"/>
    </location>
</feature>
<feature type="turn" evidence="36">
    <location>
        <begin position="950"/>
        <end position="952"/>
    </location>
</feature>
<feature type="helix" evidence="37">
    <location>
        <begin position="960"/>
        <end position="975"/>
    </location>
</feature>
<feature type="helix" evidence="37">
    <location>
        <begin position="980"/>
        <end position="982"/>
    </location>
</feature>
<feature type="helix" evidence="37">
    <location>
        <begin position="993"/>
        <end position="996"/>
    </location>
</feature>
<feature type="helix" evidence="37">
    <location>
        <begin position="1003"/>
        <end position="1010"/>
    </location>
</feature>
<feature type="strand" evidence="34">
    <location>
        <begin position="1011"/>
        <end position="1013"/>
    </location>
</feature>
<feature type="helix" evidence="37">
    <location>
        <begin position="1021"/>
        <end position="1038"/>
    </location>
</feature>
<feature type="turn" evidence="38">
    <location>
        <begin position="1044"/>
        <end position="1048"/>
    </location>
</feature>
<feature type="helix" evidence="37">
    <location>
        <begin position="1061"/>
        <end position="1080"/>
    </location>
</feature>
<feature type="turn" evidence="37">
    <location>
        <begin position="1081"/>
        <end position="1083"/>
    </location>
</feature>
<protein>
    <recommendedName>
        <fullName>E3 ubiquitin-protein ligase TRIM33</fullName>
        <ecNumber>2.3.2.27</ecNumber>
    </recommendedName>
    <alternativeName>
        <fullName>Ectodermin homolog</fullName>
    </alternativeName>
    <alternativeName>
        <fullName>RET-fused gene 7 protein</fullName>
        <shortName>Protein Rfg7</shortName>
    </alternativeName>
    <alternativeName>
        <fullName evidence="21">RING-type E3 ubiquitin transferase TRIM33</fullName>
    </alternativeName>
    <alternativeName>
        <fullName>Transcription intermediary factor 1-gamma</fullName>
        <shortName>TIF1-gamma</shortName>
    </alternativeName>
    <alternativeName>
        <fullName>Tripartite motif-containing protein 33</fullName>
    </alternativeName>
</protein>
<organism>
    <name type="scientific">Homo sapiens</name>
    <name type="common">Human</name>
    <dbReference type="NCBI Taxonomy" id="9606"/>
    <lineage>
        <taxon>Eukaryota</taxon>
        <taxon>Metazoa</taxon>
        <taxon>Chordata</taxon>
        <taxon>Craniata</taxon>
        <taxon>Vertebrata</taxon>
        <taxon>Euteleostomi</taxon>
        <taxon>Mammalia</taxon>
        <taxon>Eutheria</taxon>
        <taxon>Euarchontoglires</taxon>
        <taxon>Primates</taxon>
        <taxon>Haplorrhini</taxon>
        <taxon>Catarrhini</taxon>
        <taxon>Hominidae</taxon>
        <taxon>Homo</taxon>
    </lineage>
</organism>
<gene>
    <name type="primary">TRIM33</name>
    <name type="synonym">KIAA1113</name>
    <name type="synonym">RFG7</name>
    <name type="synonym">TIF1G</name>
</gene>